<organism>
    <name type="scientific">Escherichia coli O17:K52:H18 (strain UMN026 / ExPEC)</name>
    <dbReference type="NCBI Taxonomy" id="585056"/>
    <lineage>
        <taxon>Bacteria</taxon>
        <taxon>Pseudomonadati</taxon>
        <taxon>Pseudomonadota</taxon>
        <taxon>Gammaproteobacteria</taxon>
        <taxon>Enterobacterales</taxon>
        <taxon>Enterobacteriaceae</taxon>
        <taxon>Escherichia</taxon>
    </lineage>
</organism>
<comment type="function">
    <text evidence="1">Proton-coupled chloride transporter. Functions as antiport system and exchanges two chloride ions for 1 proton. Probably acts as an electrical shunt for an outwardly-directed proton pump that is linked to amino acid decarboxylation, as part of the extreme acid resistance (XAR) response.</text>
</comment>
<comment type="catalytic activity">
    <reaction evidence="1">
        <text>2 chloride(in) + H(+)(out) = 2 chloride(out) + H(+)(in)</text>
        <dbReference type="Rhea" id="RHEA:29567"/>
        <dbReference type="ChEBI" id="CHEBI:15378"/>
        <dbReference type="ChEBI" id="CHEBI:17996"/>
    </reaction>
</comment>
<comment type="subunit">
    <text evidence="1">Homodimer.</text>
</comment>
<comment type="subcellular location">
    <subcellularLocation>
        <location evidence="1">Cell inner membrane</location>
        <topology evidence="1">Multi-pass membrane protein</topology>
    </subcellularLocation>
</comment>
<comment type="similarity">
    <text evidence="1">Belongs to the chloride channel (TC 2.A.49) family. ClcA subfamily.</text>
</comment>
<evidence type="ECO:0000255" key="1">
    <source>
        <dbReference type="HAMAP-Rule" id="MF_01128"/>
    </source>
</evidence>
<gene>
    <name evidence="1" type="primary">clcA</name>
    <name evidence="1" type="synonym">eriC</name>
    <name type="ordered locus">ECUMN_0152</name>
</gene>
<proteinExistence type="inferred from homology"/>
<feature type="chain" id="PRO_1000137298" description="H(+)/Cl(-) exchange transporter ClcA">
    <location>
        <begin position="1"/>
        <end position="473"/>
    </location>
</feature>
<feature type="topological domain" description="Cytoplasmic" evidence="1">
    <location>
        <begin position="1"/>
        <end position="32"/>
    </location>
</feature>
<feature type="transmembrane region" description="Helical" evidence="1">
    <location>
        <begin position="33"/>
        <end position="69"/>
    </location>
</feature>
<feature type="topological domain" description="Periplasmic" evidence="1">
    <location>
        <begin position="70"/>
        <end position="76"/>
    </location>
</feature>
<feature type="transmembrane region" description="Helical" evidence="1">
    <location>
        <begin position="77"/>
        <end position="100"/>
    </location>
</feature>
<feature type="intramembrane region" description="Helical" evidence="1">
    <location>
        <begin position="109"/>
        <end position="116"/>
    </location>
</feature>
<feature type="topological domain" description="Cytoplasmic" evidence="1">
    <location>
        <begin position="117"/>
        <end position="123"/>
    </location>
</feature>
<feature type="transmembrane region" description="Helical" evidence="1">
    <location>
        <begin position="124"/>
        <end position="141"/>
    </location>
</feature>
<feature type="transmembrane region" description="Helical" evidence="1">
    <location>
        <begin position="148"/>
        <end position="166"/>
    </location>
</feature>
<feature type="topological domain" description="Cytoplasmic" evidence="1">
    <location>
        <begin position="167"/>
        <end position="176"/>
    </location>
</feature>
<feature type="intramembrane region" description="Helical" evidence="1">
    <location>
        <begin position="177"/>
        <end position="189"/>
    </location>
</feature>
<feature type="intramembrane region" description="Helical" evidence="1">
    <location>
        <begin position="193"/>
        <end position="201"/>
    </location>
</feature>
<feature type="topological domain" description="Cytoplasmic" evidence="1">
    <location>
        <begin position="202"/>
        <end position="214"/>
    </location>
</feature>
<feature type="transmembrane region" description="Helical" evidence="1">
    <location>
        <begin position="215"/>
        <end position="232"/>
    </location>
</feature>
<feature type="topological domain" description="Periplasmic" evidence="1">
    <location>
        <begin position="233"/>
        <end position="252"/>
    </location>
</feature>
<feature type="transmembrane region" description="Helical" evidence="1">
    <location>
        <begin position="253"/>
        <end position="281"/>
    </location>
</feature>
<feature type="topological domain" description="Cytoplasmic" evidence="1">
    <location>
        <begin position="282"/>
        <end position="287"/>
    </location>
</feature>
<feature type="transmembrane region" description="Helical" evidence="1">
    <location>
        <begin position="288"/>
        <end position="309"/>
    </location>
</feature>
<feature type="topological domain" description="Periplasmic" evidence="1">
    <location>
        <begin position="310"/>
        <end position="329"/>
    </location>
</feature>
<feature type="transmembrane region" description="Helical" evidence="1">
    <location>
        <begin position="330"/>
        <end position="349"/>
    </location>
</feature>
<feature type="transmembrane region" description="Helical" evidence="1">
    <location>
        <begin position="355"/>
        <end position="376"/>
    </location>
</feature>
<feature type="topological domain" description="Periplasmic" evidence="1">
    <location>
        <begin position="377"/>
        <end position="386"/>
    </location>
</feature>
<feature type="intramembrane region" description="Helical" evidence="1">
    <location>
        <begin position="387"/>
        <end position="401"/>
    </location>
</feature>
<feature type="intramembrane region" description="Note=Loop between two helices" evidence="1">
    <location>
        <begin position="402"/>
        <end position="404"/>
    </location>
</feature>
<feature type="intramembrane region" description="Helical" evidence="1">
    <location>
        <begin position="405"/>
        <end position="416"/>
    </location>
</feature>
<feature type="intramembrane region" description="Note=Loop between two helices" evidence="1">
    <location>
        <begin position="417"/>
        <end position="421"/>
    </location>
</feature>
<feature type="transmembrane region" description="Helical" evidence="1">
    <location>
        <begin position="422"/>
        <end position="438"/>
    </location>
</feature>
<feature type="topological domain" description="Cytoplasmic" evidence="1">
    <location>
        <begin position="439"/>
        <end position="473"/>
    </location>
</feature>
<feature type="short sequence motif" description="Selectivity filter part_1" evidence="1">
    <location>
        <begin position="106"/>
        <end position="110"/>
    </location>
</feature>
<feature type="short sequence motif" description="Selectivity filter part_2" evidence="1">
    <location>
        <begin position="146"/>
        <end position="150"/>
    </location>
</feature>
<feature type="short sequence motif" description="Selectivity filter part_3" evidence="1">
    <location>
        <begin position="355"/>
        <end position="359"/>
    </location>
</feature>
<feature type="binding site" evidence="1">
    <location>
        <position position="107"/>
    </location>
    <ligand>
        <name>chloride</name>
        <dbReference type="ChEBI" id="CHEBI:17996"/>
    </ligand>
</feature>
<feature type="binding site" evidence="1">
    <location>
        <position position="356"/>
    </location>
    <ligand>
        <name>chloride</name>
        <dbReference type="ChEBI" id="CHEBI:17996"/>
    </ligand>
</feature>
<feature type="binding site" evidence="1">
    <location>
        <position position="357"/>
    </location>
    <ligand>
        <name>chloride</name>
        <dbReference type="ChEBI" id="CHEBI:17996"/>
    </ligand>
</feature>
<feature type="binding site" evidence="1">
    <location>
        <position position="445"/>
    </location>
    <ligand>
        <name>chloride</name>
        <dbReference type="ChEBI" id="CHEBI:17996"/>
    </ligand>
</feature>
<feature type="site" description="Mediates proton transfer from the outer aqueous phase to the interior of the protein; involved in linking H(+) and Cl(-) transport" evidence="1">
    <location>
        <position position="148"/>
    </location>
</feature>
<feature type="site" description="Mediates proton transfer from the protein to the inner aqueous phase" evidence="1">
    <location>
        <position position="203"/>
    </location>
</feature>
<name>CLCA_ECOLU</name>
<keyword id="KW-0050">Antiport</keyword>
<keyword id="KW-0997">Cell inner membrane</keyword>
<keyword id="KW-1003">Cell membrane</keyword>
<keyword id="KW-0868">Chloride</keyword>
<keyword id="KW-0406">Ion transport</keyword>
<keyword id="KW-0472">Membrane</keyword>
<keyword id="KW-0812">Transmembrane</keyword>
<keyword id="KW-1133">Transmembrane helix</keyword>
<keyword id="KW-0813">Transport</keyword>
<accession>B7N824</accession>
<dbReference type="EMBL" id="CU928163">
    <property type="protein sequence ID" value="CAR11374.1"/>
    <property type="molecule type" value="Genomic_DNA"/>
</dbReference>
<dbReference type="RefSeq" id="WP_000845394.1">
    <property type="nucleotide sequence ID" value="NC_011751.1"/>
</dbReference>
<dbReference type="RefSeq" id="YP_002410930.1">
    <property type="nucleotide sequence ID" value="NC_011751.1"/>
</dbReference>
<dbReference type="SMR" id="B7N824"/>
<dbReference type="STRING" id="585056.ECUMN_0152"/>
<dbReference type="GeneID" id="93777272"/>
<dbReference type="KEGG" id="eum:ECUMN_0152"/>
<dbReference type="PATRIC" id="fig|585056.7.peg.346"/>
<dbReference type="HOGENOM" id="CLU_015263_7_0_6"/>
<dbReference type="Proteomes" id="UP000007097">
    <property type="component" value="Chromosome"/>
</dbReference>
<dbReference type="GO" id="GO:0005886">
    <property type="term" value="C:plasma membrane"/>
    <property type="evidence" value="ECO:0007669"/>
    <property type="project" value="UniProtKB-SubCell"/>
</dbReference>
<dbReference type="GO" id="GO:0015297">
    <property type="term" value="F:antiporter activity"/>
    <property type="evidence" value="ECO:0007669"/>
    <property type="project" value="UniProtKB-UniRule"/>
</dbReference>
<dbReference type="GO" id="GO:0005247">
    <property type="term" value="F:voltage-gated chloride channel activity"/>
    <property type="evidence" value="ECO:0007669"/>
    <property type="project" value="TreeGrafter"/>
</dbReference>
<dbReference type="CDD" id="cd01031">
    <property type="entry name" value="EriC"/>
    <property type="match status" value="1"/>
</dbReference>
<dbReference type="FunFam" id="1.10.3080.10:FF:000005">
    <property type="entry name" value="H(+)/Cl(-) exchange transporter ClcA"/>
    <property type="match status" value="1"/>
</dbReference>
<dbReference type="Gene3D" id="1.10.3080.10">
    <property type="entry name" value="Clc chloride channel"/>
    <property type="match status" value="1"/>
</dbReference>
<dbReference type="HAMAP" id="MF_01128">
    <property type="entry name" value="CLC_ClcA"/>
    <property type="match status" value="1"/>
</dbReference>
<dbReference type="InterPro" id="IPR023861">
    <property type="entry name" value="Cl-channel_ClcA"/>
</dbReference>
<dbReference type="InterPro" id="IPR014743">
    <property type="entry name" value="Cl-channel_core"/>
</dbReference>
<dbReference type="InterPro" id="IPR001807">
    <property type="entry name" value="ClC"/>
</dbReference>
<dbReference type="NCBIfam" id="NF003640">
    <property type="entry name" value="PRK05277.1"/>
    <property type="match status" value="1"/>
</dbReference>
<dbReference type="PANTHER" id="PTHR45711">
    <property type="entry name" value="CHLORIDE CHANNEL PROTEIN"/>
    <property type="match status" value="1"/>
</dbReference>
<dbReference type="PANTHER" id="PTHR45711:SF6">
    <property type="entry name" value="CHLORIDE CHANNEL PROTEIN"/>
    <property type="match status" value="1"/>
</dbReference>
<dbReference type="Pfam" id="PF00654">
    <property type="entry name" value="Voltage_CLC"/>
    <property type="match status" value="1"/>
</dbReference>
<dbReference type="PRINTS" id="PR00762">
    <property type="entry name" value="CLCHANNEL"/>
</dbReference>
<dbReference type="SUPFAM" id="SSF81340">
    <property type="entry name" value="Clc chloride channel"/>
    <property type="match status" value="1"/>
</dbReference>
<protein>
    <recommendedName>
        <fullName evidence="1">H(+)/Cl(-) exchange transporter ClcA</fullName>
    </recommendedName>
</protein>
<reference key="1">
    <citation type="journal article" date="2009" name="PLoS Genet.">
        <title>Organised genome dynamics in the Escherichia coli species results in highly diverse adaptive paths.</title>
        <authorList>
            <person name="Touchon M."/>
            <person name="Hoede C."/>
            <person name="Tenaillon O."/>
            <person name="Barbe V."/>
            <person name="Baeriswyl S."/>
            <person name="Bidet P."/>
            <person name="Bingen E."/>
            <person name="Bonacorsi S."/>
            <person name="Bouchier C."/>
            <person name="Bouvet O."/>
            <person name="Calteau A."/>
            <person name="Chiapello H."/>
            <person name="Clermont O."/>
            <person name="Cruveiller S."/>
            <person name="Danchin A."/>
            <person name="Diard M."/>
            <person name="Dossat C."/>
            <person name="Karoui M.E."/>
            <person name="Frapy E."/>
            <person name="Garry L."/>
            <person name="Ghigo J.M."/>
            <person name="Gilles A.M."/>
            <person name="Johnson J."/>
            <person name="Le Bouguenec C."/>
            <person name="Lescat M."/>
            <person name="Mangenot S."/>
            <person name="Martinez-Jehanne V."/>
            <person name="Matic I."/>
            <person name="Nassif X."/>
            <person name="Oztas S."/>
            <person name="Petit M.A."/>
            <person name="Pichon C."/>
            <person name="Rouy Z."/>
            <person name="Ruf C.S."/>
            <person name="Schneider D."/>
            <person name="Tourret J."/>
            <person name="Vacherie B."/>
            <person name="Vallenet D."/>
            <person name="Medigue C."/>
            <person name="Rocha E.P.C."/>
            <person name="Denamur E."/>
        </authorList>
    </citation>
    <scope>NUCLEOTIDE SEQUENCE [LARGE SCALE GENOMIC DNA]</scope>
    <source>
        <strain>UMN026 / ExPEC</strain>
    </source>
</reference>
<sequence>MKTDTPSLETPQAARLRRRQLIRQLLERDKTPLAILFMAAVVGTLVGLAAVAFDKGVAWLQNQRMGALVHTADNYPLLLTVAFLCSAVLAMFGYFLVRKYAPEAGGSGIPEIEGALEDQRPVRWWRVLPVKFFGGLGTLGGGMVLGREGPTVQIGGNIGRMVLDIFRLKGDEARHTLLATGAAAGLAAAFNAPLAGILFIIEEMRPQFRYTLISIKAVFIGVIMSTIMYRIFNHEVALIDVGKLSDAPLNTLWLYLILGIIFGIFGPIFNKWVLGMQDLLHRVHGGNITKWVLMGGAIGGLCGLLGFVAPATSGGGFNLIPIATAGNFSMGMLVFIFVARVITTLLCFSSGAPGGIFAPMLALGTVLGTAFGMVAVELFPQYHLEAGTFAIAGMGALLAASIRAPLTGIILVLEMTDNYQLILPMIITGLGATLLAQFTGGKPLYSAILARTLAKQEAEQLARSKAASASENT</sequence>